<feature type="chain" id="PRO_0000427618" description="Uncharacterized protein MT0921.1">
    <location>
        <begin position="1"/>
        <end position="87"/>
    </location>
</feature>
<feature type="region of interest" description="Disordered" evidence="1">
    <location>
        <begin position="67"/>
        <end position="87"/>
    </location>
</feature>
<gene>
    <name type="ordered locus">MT0921.1</name>
</gene>
<name>Y898_MYCTO</name>
<reference key="1">
    <citation type="journal article" date="2002" name="J. Bacteriol.">
        <title>Whole-genome comparison of Mycobacterium tuberculosis clinical and laboratory strains.</title>
        <authorList>
            <person name="Fleischmann R.D."/>
            <person name="Alland D."/>
            <person name="Eisen J.A."/>
            <person name="Carpenter L."/>
            <person name="White O."/>
            <person name="Peterson J.D."/>
            <person name="DeBoy R.T."/>
            <person name="Dodson R.J."/>
            <person name="Gwinn M.L."/>
            <person name="Haft D.H."/>
            <person name="Hickey E.K."/>
            <person name="Kolonay J.F."/>
            <person name="Nelson W.C."/>
            <person name="Umayam L.A."/>
            <person name="Ermolaeva M.D."/>
            <person name="Salzberg S.L."/>
            <person name="Delcher A."/>
            <person name="Utterback T.R."/>
            <person name="Weidman J.F."/>
            <person name="Khouri H.M."/>
            <person name="Gill J."/>
            <person name="Mikula A."/>
            <person name="Bishai W."/>
            <person name="Jacobs W.R. Jr."/>
            <person name="Venter J.C."/>
            <person name="Fraser C.M."/>
        </authorList>
    </citation>
    <scope>NUCLEOTIDE SEQUENCE [LARGE SCALE GENOMIC DNA]</scope>
    <source>
        <strain>CDC 1551 / Oshkosh</strain>
    </source>
</reference>
<sequence length="87" mass="9920">MGKGRKPTDSETLAHIRDLVAEEKALRAQLRHGGISESEEQQQLRRIEIELDQCWDLLRQRRALRQTGGDPREAVVRPADQVEGYTG</sequence>
<accession>P9WKP4</accession>
<accession>L0T584</accession>
<accession>P64753</accession>
<accession>Q10566</accession>
<dbReference type="EMBL" id="AE000516">
    <property type="protein sequence ID" value="AAK45168.1"/>
    <property type="molecule type" value="Genomic_DNA"/>
</dbReference>
<dbReference type="PIR" id="G70782">
    <property type="entry name" value="G70782"/>
</dbReference>
<dbReference type="RefSeq" id="WP_003404673.1">
    <property type="nucleotide sequence ID" value="NZ_KK341227.1"/>
</dbReference>
<dbReference type="SMR" id="P9WKP4"/>
<dbReference type="KEGG" id="mtc:MT0921.1"/>
<dbReference type="PATRIC" id="fig|83331.31.peg.990"/>
<dbReference type="HOGENOM" id="CLU_175454_0_0_11"/>
<dbReference type="Proteomes" id="UP000001020">
    <property type="component" value="Chromosome"/>
</dbReference>
<dbReference type="InterPro" id="IPR020311">
    <property type="entry name" value="Uncharacterised_Rv0898c"/>
</dbReference>
<dbReference type="Pfam" id="PF10944">
    <property type="entry name" value="DUF2630"/>
    <property type="match status" value="1"/>
</dbReference>
<protein>
    <recommendedName>
        <fullName>Uncharacterized protein MT0921.1</fullName>
    </recommendedName>
</protein>
<proteinExistence type="predicted"/>
<evidence type="ECO:0000256" key="1">
    <source>
        <dbReference type="SAM" id="MobiDB-lite"/>
    </source>
</evidence>
<keyword id="KW-1185">Reference proteome</keyword>
<organism>
    <name type="scientific">Mycobacterium tuberculosis (strain CDC 1551 / Oshkosh)</name>
    <dbReference type="NCBI Taxonomy" id="83331"/>
    <lineage>
        <taxon>Bacteria</taxon>
        <taxon>Bacillati</taxon>
        <taxon>Actinomycetota</taxon>
        <taxon>Actinomycetes</taxon>
        <taxon>Mycobacteriales</taxon>
        <taxon>Mycobacteriaceae</taxon>
        <taxon>Mycobacterium</taxon>
        <taxon>Mycobacterium tuberculosis complex</taxon>
    </lineage>
</organism>